<comment type="function">
    <text evidence="1">Accelerates the degradation of transcripts by removing pyrophosphate from the 5'-end of triphosphorylated RNA, leading to a more labile monophosphorylated state that can stimulate subsequent ribonuclease cleavage.</text>
</comment>
<comment type="cofactor">
    <cofactor evidence="1">
        <name>a divalent metal cation</name>
        <dbReference type="ChEBI" id="CHEBI:60240"/>
    </cofactor>
</comment>
<comment type="similarity">
    <text evidence="1">Belongs to the Nudix hydrolase family. RppH subfamily.</text>
</comment>
<comment type="sequence caution" evidence="2">
    <conflict type="erroneous initiation">
        <sequence resource="EMBL-CDS" id="AAN30731"/>
    </conflict>
</comment>
<comment type="sequence caution" evidence="2">
    <conflict type="erroneous initiation">
        <sequence resource="EMBL-CDS" id="AEM19148"/>
    </conflict>
    <text>Extended N-terminus.</text>
</comment>
<evidence type="ECO:0000255" key="1">
    <source>
        <dbReference type="HAMAP-Rule" id="MF_00298"/>
    </source>
</evidence>
<evidence type="ECO:0000305" key="2"/>
<sequence>MSKHKGPTGAMVDPESLPYRPCVGLMVLNKAGLVWAGRRIVIPGDEMDGATQLWQMPQGGIDKGEDPAQAALRELYEETGMTSVSLLEEASDWINYDLPPHLVGLALKGKYRGQTQKWFAYRFEGDESEIAINPPPGGHTAEFDCWEWKPMADLPNLIVPFKRKVYEQVVATFRHLAA</sequence>
<protein>
    <recommendedName>
        <fullName evidence="1">RNA pyrophosphohydrolase</fullName>
        <ecNumber evidence="1">3.6.1.-</ecNumber>
    </recommendedName>
    <alternativeName>
        <fullName evidence="1">(Di)nucleoside polyphosphate hydrolase</fullName>
    </alternativeName>
</protein>
<feature type="chain" id="PRO_0000056999" description="RNA pyrophosphohydrolase">
    <location>
        <begin position="1"/>
        <end position="178"/>
    </location>
</feature>
<feature type="domain" description="Nudix hydrolase" evidence="1">
    <location>
        <begin position="18"/>
        <end position="171"/>
    </location>
</feature>
<feature type="short sequence motif" description="Nudix box">
    <location>
        <begin position="59"/>
        <end position="80"/>
    </location>
</feature>
<keyword id="KW-0378">Hydrolase</keyword>
<proteinExistence type="inferred from homology"/>
<organism>
    <name type="scientific">Brucella suis biovar 1 (strain 1330)</name>
    <dbReference type="NCBI Taxonomy" id="204722"/>
    <lineage>
        <taxon>Bacteria</taxon>
        <taxon>Pseudomonadati</taxon>
        <taxon>Pseudomonadota</taxon>
        <taxon>Alphaproteobacteria</taxon>
        <taxon>Hyphomicrobiales</taxon>
        <taxon>Brucellaceae</taxon>
        <taxon>Brucella/Ochrobactrum group</taxon>
        <taxon>Brucella</taxon>
    </lineage>
</organism>
<gene>
    <name evidence="1" type="primary">rppH</name>
    <name type="synonym">ialA</name>
    <name evidence="1" type="synonym">nudH</name>
    <name type="ordered locus">BR1836</name>
    <name type="ordered locus">BS1330_I1830</name>
</gene>
<name>RPPH_BRUSU</name>
<accession>Q8FYM9</accession>
<accession>G0K7Q2</accession>
<dbReference type="EC" id="3.6.1.-" evidence="1"/>
<dbReference type="EMBL" id="AE014291">
    <property type="protein sequence ID" value="AAN30731.1"/>
    <property type="status" value="ALT_INIT"/>
    <property type="molecule type" value="Genomic_DNA"/>
</dbReference>
<dbReference type="EMBL" id="CP002997">
    <property type="protein sequence ID" value="AEM19148.1"/>
    <property type="status" value="ALT_INIT"/>
    <property type="molecule type" value="Genomic_DNA"/>
</dbReference>
<dbReference type="RefSeq" id="WP_004688740.1">
    <property type="nucleotide sequence ID" value="NZ_KN046804.1"/>
</dbReference>
<dbReference type="SMR" id="Q8FYM9"/>
<dbReference type="KEGG" id="bms:BR1836"/>
<dbReference type="KEGG" id="bsi:BS1330_I1830"/>
<dbReference type="PATRIC" id="fig|204722.21.peg.3461"/>
<dbReference type="HOGENOM" id="CLU_087195_3_0_5"/>
<dbReference type="PhylomeDB" id="Q8FYM9"/>
<dbReference type="Proteomes" id="UP000007104">
    <property type="component" value="Chromosome I"/>
</dbReference>
<dbReference type="GO" id="GO:0034432">
    <property type="term" value="F:bis(5'-adenosyl)-pentaphosphatase activity"/>
    <property type="evidence" value="ECO:0007669"/>
    <property type="project" value="TreeGrafter"/>
</dbReference>
<dbReference type="GO" id="GO:0008893">
    <property type="term" value="F:guanosine-3',5'-bis(diphosphate) 3'-diphosphatase activity"/>
    <property type="evidence" value="ECO:0007669"/>
    <property type="project" value="TreeGrafter"/>
</dbReference>
<dbReference type="GO" id="GO:0006753">
    <property type="term" value="P:nucleoside phosphate metabolic process"/>
    <property type="evidence" value="ECO:0007669"/>
    <property type="project" value="TreeGrafter"/>
</dbReference>
<dbReference type="GO" id="GO:0019693">
    <property type="term" value="P:ribose phosphate metabolic process"/>
    <property type="evidence" value="ECO:0007669"/>
    <property type="project" value="TreeGrafter"/>
</dbReference>
<dbReference type="CDD" id="cd03671">
    <property type="entry name" value="NUDIX_Ap4A_hydrolase_plant_like"/>
    <property type="match status" value="1"/>
</dbReference>
<dbReference type="Gene3D" id="3.90.79.10">
    <property type="entry name" value="Nucleoside Triphosphate Pyrophosphohydrolase"/>
    <property type="match status" value="1"/>
</dbReference>
<dbReference type="HAMAP" id="MF_00298">
    <property type="entry name" value="Nudix_RppH"/>
    <property type="match status" value="1"/>
</dbReference>
<dbReference type="InterPro" id="IPR020476">
    <property type="entry name" value="Nudix_hydrolase"/>
</dbReference>
<dbReference type="InterPro" id="IPR015797">
    <property type="entry name" value="NUDIX_hydrolase-like_dom_sf"/>
</dbReference>
<dbReference type="InterPro" id="IPR020084">
    <property type="entry name" value="NUDIX_hydrolase_CS"/>
</dbReference>
<dbReference type="InterPro" id="IPR000086">
    <property type="entry name" value="NUDIX_hydrolase_dom"/>
</dbReference>
<dbReference type="InterPro" id="IPR022927">
    <property type="entry name" value="RppH"/>
</dbReference>
<dbReference type="NCBIfam" id="NF001938">
    <property type="entry name" value="PRK00714.1-5"/>
    <property type="match status" value="1"/>
</dbReference>
<dbReference type="PANTHER" id="PTHR11839:SF22">
    <property type="entry name" value="NUDIX HYDROLASE 26, CHLOROPLASTIC"/>
    <property type="match status" value="1"/>
</dbReference>
<dbReference type="PANTHER" id="PTHR11839">
    <property type="entry name" value="UDP/ADP-SUGAR PYROPHOSPHATASE"/>
    <property type="match status" value="1"/>
</dbReference>
<dbReference type="Pfam" id="PF00293">
    <property type="entry name" value="NUDIX"/>
    <property type="match status" value="1"/>
</dbReference>
<dbReference type="PRINTS" id="PR00502">
    <property type="entry name" value="NUDIXFAMILY"/>
</dbReference>
<dbReference type="SUPFAM" id="SSF55811">
    <property type="entry name" value="Nudix"/>
    <property type="match status" value="1"/>
</dbReference>
<dbReference type="PROSITE" id="PS51462">
    <property type="entry name" value="NUDIX"/>
    <property type="match status" value="1"/>
</dbReference>
<dbReference type="PROSITE" id="PS00893">
    <property type="entry name" value="NUDIX_BOX"/>
    <property type="match status" value="1"/>
</dbReference>
<reference key="1">
    <citation type="journal article" date="2002" name="Proc. Natl. Acad. Sci. U.S.A.">
        <title>The Brucella suis genome reveals fundamental similarities between animal and plant pathogens and symbionts.</title>
        <authorList>
            <person name="Paulsen I.T."/>
            <person name="Seshadri R."/>
            <person name="Nelson K.E."/>
            <person name="Eisen J.A."/>
            <person name="Heidelberg J.F."/>
            <person name="Read T.D."/>
            <person name="Dodson R.J."/>
            <person name="Umayam L.A."/>
            <person name="Brinkac L.M."/>
            <person name="Beanan M.J."/>
            <person name="Daugherty S.C."/>
            <person name="DeBoy R.T."/>
            <person name="Durkin A.S."/>
            <person name="Kolonay J.F."/>
            <person name="Madupu R."/>
            <person name="Nelson W.C."/>
            <person name="Ayodeji B."/>
            <person name="Kraul M."/>
            <person name="Shetty J."/>
            <person name="Malek J.A."/>
            <person name="Van Aken S.E."/>
            <person name="Riedmuller S."/>
            <person name="Tettelin H."/>
            <person name="Gill S.R."/>
            <person name="White O."/>
            <person name="Salzberg S.L."/>
            <person name="Hoover D.L."/>
            <person name="Lindler L.E."/>
            <person name="Halling S.M."/>
            <person name="Boyle S.M."/>
            <person name="Fraser C.M."/>
        </authorList>
    </citation>
    <scope>NUCLEOTIDE SEQUENCE [LARGE SCALE GENOMIC DNA]</scope>
    <source>
        <strain>1330</strain>
    </source>
</reference>
<reference key="2">
    <citation type="journal article" date="2011" name="J. Bacteriol.">
        <title>Revised genome sequence of Brucella suis 1330.</title>
        <authorList>
            <person name="Tae H."/>
            <person name="Shallom S."/>
            <person name="Settlage R."/>
            <person name="Preston D."/>
            <person name="Adams L.G."/>
            <person name="Garner H.R."/>
        </authorList>
    </citation>
    <scope>NUCLEOTIDE SEQUENCE [LARGE SCALE GENOMIC DNA]</scope>
    <source>
        <strain>1330</strain>
    </source>
</reference>